<organism>
    <name type="scientific">Homo sapiens</name>
    <name type="common">Human</name>
    <dbReference type="NCBI Taxonomy" id="9606"/>
    <lineage>
        <taxon>Eukaryota</taxon>
        <taxon>Metazoa</taxon>
        <taxon>Chordata</taxon>
        <taxon>Craniata</taxon>
        <taxon>Vertebrata</taxon>
        <taxon>Euteleostomi</taxon>
        <taxon>Mammalia</taxon>
        <taxon>Eutheria</taxon>
        <taxon>Euarchontoglires</taxon>
        <taxon>Primates</taxon>
        <taxon>Haplorrhini</taxon>
        <taxon>Catarrhini</taxon>
        <taxon>Hominidae</taxon>
        <taxon>Homo</taxon>
    </lineage>
</organism>
<feature type="chain" id="PRO_0000046382" description="Phospholipid-transporting ATPase VD">
    <location>
        <begin position="1"/>
        <end position="1426"/>
    </location>
</feature>
<feature type="topological domain" description="Cytoplasmic" evidence="6">
    <location>
        <begin position="1"/>
        <end position="97"/>
    </location>
</feature>
<feature type="transmembrane region" description="Helical" evidence="6">
    <location>
        <begin position="98"/>
        <end position="118"/>
    </location>
</feature>
<feature type="topological domain" description="Exoplasmic loop" evidence="6">
    <location>
        <begin position="119"/>
        <end position="121"/>
    </location>
</feature>
<feature type="transmembrane region" description="Helical" evidence="6">
    <location>
        <begin position="122"/>
        <end position="142"/>
    </location>
</feature>
<feature type="topological domain" description="Cytoplasmic" evidence="6">
    <location>
        <begin position="143"/>
        <end position="321"/>
    </location>
</feature>
<feature type="transmembrane region" description="Helical" evidence="6">
    <location>
        <begin position="322"/>
        <end position="342"/>
    </location>
</feature>
<feature type="topological domain" description="Exoplasmic loop" evidence="6">
    <location>
        <begin position="343"/>
        <end position="365"/>
    </location>
</feature>
<feature type="transmembrane region" description="Helical" evidence="6">
    <location>
        <begin position="366"/>
        <end position="386"/>
    </location>
</feature>
<feature type="topological domain" description="Cytoplasmic" evidence="6">
    <location>
        <begin position="387"/>
        <end position="1113"/>
    </location>
</feature>
<feature type="transmembrane region" description="Helical" evidence="6">
    <location>
        <begin position="1114"/>
        <end position="1134"/>
    </location>
</feature>
<feature type="topological domain" description="Exoplasmic loop" evidence="6">
    <location>
        <begin position="1135"/>
        <end position="1145"/>
    </location>
</feature>
<feature type="transmembrane region" description="Helical" evidence="6">
    <location>
        <begin position="1146"/>
        <end position="1166"/>
    </location>
</feature>
<feature type="topological domain" description="Cytoplasmic" evidence="6">
    <location>
        <begin position="1167"/>
        <end position="1195"/>
    </location>
</feature>
<feature type="transmembrane region" description="Helical" evidence="6">
    <location>
        <begin position="1196"/>
        <end position="1216"/>
    </location>
</feature>
<feature type="topological domain" description="Exoplasmic loop" evidence="6">
    <location>
        <begin position="1217"/>
        <end position="1224"/>
    </location>
</feature>
<feature type="transmembrane region" description="Helical" evidence="6">
    <location>
        <begin position="1225"/>
        <end position="1245"/>
    </location>
</feature>
<feature type="topological domain" description="Cytoplasmic" evidence="6">
    <location>
        <begin position="1246"/>
        <end position="1252"/>
    </location>
</feature>
<feature type="transmembrane region" description="Helical" evidence="6">
    <location>
        <begin position="1253"/>
        <end position="1273"/>
    </location>
</feature>
<feature type="topological domain" description="Exoplasmic loop" evidence="6">
    <location>
        <begin position="1274"/>
        <end position="1292"/>
    </location>
</feature>
<feature type="transmembrane region" description="Helical" evidence="6">
    <location>
        <begin position="1293"/>
        <end position="1313"/>
    </location>
</feature>
<feature type="topological domain" description="Cytoplasmic" evidence="6">
    <location>
        <begin position="1314"/>
        <end position="1426"/>
    </location>
</feature>
<feature type="region of interest" description="Disordered" evidence="7">
    <location>
        <begin position="506"/>
        <end position="531"/>
    </location>
</feature>
<feature type="compositionally biased region" description="Polar residues" evidence="7">
    <location>
        <begin position="512"/>
        <end position="524"/>
    </location>
</feature>
<feature type="active site" description="4-aspartylphosphate intermediate" evidence="4">
    <location>
        <position position="438"/>
    </location>
</feature>
<feature type="binding site" evidence="5">
    <location>
        <position position="438"/>
    </location>
    <ligand>
        <name>ATP</name>
        <dbReference type="ChEBI" id="CHEBI:30616"/>
    </ligand>
</feature>
<feature type="binding site" evidence="5">
    <location>
        <position position="438"/>
    </location>
    <ligand>
        <name>Mg(2+)</name>
        <dbReference type="ChEBI" id="CHEBI:18420"/>
    </ligand>
</feature>
<feature type="binding site" evidence="5">
    <location>
        <position position="439"/>
    </location>
    <ligand>
        <name>ATP</name>
        <dbReference type="ChEBI" id="CHEBI:30616"/>
    </ligand>
</feature>
<feature type="binding site" evidence="5">
    <location>
        <position position="440"/>
    </location>
    <ligand>
        <name>ATP</name>
        <dbReference type="ChEBI" id="CHEBI:30616"/>
    </ligand>
</feature>
<feature type="binding site" evidence="5">
    <location>
        <position position="440"/>
    </location>
    <ligand>
        <name>Mg(2+)</name>
        <dbReference type="ChEBI" id="CHEBI:18420"/>
    </ligand>
</feature>
<feature type="binding site" evidence="2">
    <location>
        <position position="730"/>
    </location>
    <ligand>
        <name>ATP</name>
        <dbReference type="ChEBI" id="CHEBI:30616"/>
    </ligand>
</feature>
<feature type="binding site" evidence="5">
    <location>
        <position position="772"/>
    </location>
    <ligand>
        <name>ATP</name>
        <dbReference type="ChEBI" id="CHEBI:30616"/>
    </ligand>
</feature>
<feature type="binding site" evidence="2">
    <location>
        <position position="796"/>
    </location>
    <ligand>
        <name>ATP</name>
        <dbReference type="ChEBI" id="CHEBI:30616"/>
    </ligand>
</feature>
<feature type="binding site" evidence="2">
    <location>
        <position position="840"/>
    </location>
    <ligand>
        <name>ATP</name>
        <dbReference type="ChEBI" id="CHEBI:30616"/>
    </ligand>
</feature>
<feature type="binding site" evidence="2">
    <location>
        <position position="920"/>
    </location>
    <ligand>
        <name>ATP</name>
        <dbReference type="ChEBI" id="CHEBI:30616"/>
    </ligand>
</feature>
<feature type="binding site" evidence="2">
    <location>
        <position position="921"/>
    </location>
    <ligand>
        <name>ATP</name>
        <dbReference type="ChEBI" id="CHEBI:30616"/>
    </ligand>
</feature>
<feature type="binding site" evidence="2">
    <location>
        <position position="922"/>
    </location>
    <ligand>
        <name>ATP</name>
        <dbReference type="ChEBI" id="CHEBI:30616"/>
    </ligand>
</feature>
<feature type="binding site" evidence="6">
    <location>
        <begin position="996"/>
        <end position="1003"/>
    </location>
    <ligand>
        <name>ATP</name>
        <dbReference type="ChEBI" id="CHEBI:30616"/>
    </ligand>
</feature>
<feature type="binding site" evidence="2">
    <location>
        <position position="1030"/>
    </location>
    <ligand>
        <name>ATP</name>
        <dbReference type="ChEBI" id="CHEBI:30616"/>
    </ligand>
</feature>
<feature type="binding site" evidence="2">
    <location>
        <position position="1036"/>
    </location>
    <ligand>
        <name>ATP</name>
        <dbReference type="ChEBI" id="CHEBI:30616"/>
    </ligand>
</feature>
<feature type="binding site" evidence="3">
    <location>
        <position position="1056"/>
    </location>
    <ligand>
        <name>Mg(2+)</name>
        <dbReference type="ChEBI" id="CHEBI:18420"/>
    </ligand>
</feature>
<feature type="binding site" evidence="5">
    <location>
        <position position="1059"/>
    </location>
    <ligand>
        <name>ATP</name>
        <dbReference type="ChEBI" id="CHEBI:30616"/>
    </ligand>
</feature>
<feature type="binding site" evidence="5">
    <location>
        <position position="1060"/>
    </location>
    <ligand>
        <name>ATP</name>
        <dbReference type="ChEBI" id="CHEBI:30616"/>
    </ligand>
</feature>
<feature type="binding site" evidence="3">
    <location>
        <position position="1060"/>
    </location>
    <ligand>
        <name>Mg(2+)</name>
        <dbReference type="ChEBI" id="CHEBI:18420"/>
    </ligand>
</feature>
<feature type="binding site" evidence="6">
    <location>
        <begin position="1364"/>
        <end position="1371"/>
    </location>
    <ligand>
        <name>ATP</name>
        <dbReference type="ChEBI" id="CHEBI:30616"/>
    </ligand>
</feature>
<feature type="splice variant" id="VSP_006954" description="In isoform 2." evidence="14">
    <location>
        <begin position="553"/>
        <end position="747"/>
    </location>
</feature>
<feature type="sequence variant" id="VAR_048385" description="In dbSNP:rs33995001." evidence="10">
    <original>T</original>
    <variation>I</variation>
    <location>
        <position position="43"/>
    </location>
</feature>
<feature type="sequence variant" id="VAR_048386" description="In dbSNP:rs7683838.">
    <original>C</original>
    <variation>R</variation>
    <location>
        <position position="171"/>
    </location>
</feature>
<feature type="sequence variant" id="VAR_048387" description="In dbSNP:rs35596623.">
    <original>T</original>
    <variation>I</variation>
    <location>
        <position position="320"/>
    </location>
</feature>
<feature type="sequence variant" id="VAR_048388" description="In dbSNP:rs35012290.">
    <original>A</original>
    <variation>T</variation>
    <location>
        <position position="337"/>
    </location>
</feature>
<feature type="sequence variant" id="VAR_048389" description="In dbSNP:rs10003238.">
    <original>N</original>
    <variation>S</variation>
    <location>
        <position position="511"/>
    </location>
</feature>
<feature type="sequence variant" id="VAR_048390" description="In dbSNP:rs6843325.">
    <original>F</original>
    <variation>L</variation>
    <location>
        <position position="522"/>
    </location>
</feature>
<feature type="sequence variant" id="VAR_048391" description="In dbSNP:rs34208443.">
    <original>P</original>
    <variation>T</variation>
    <location>
        <position position="716"/>
    </location>
</feature>
<feature type="sequence variant" id="VAR_048392" description="In dbSNP:rs34169638.">
    <original>N</original>
    <variation>S</variation>
    <location>
        <position position="720"/>
    </location>
</feature>
<feature type="sequence variant" id="VAR_048393" description="In dbSNP:rs17462252.">
    <original>S</original>
    <variation>N</variation>
    <location>
        <position position="959"/>
    </location>
</feature>
<feature type="sequence variant" id="VAR_048394" description="In dbSNP:rs16851681.">
    <original>R</original>
    <variation>K</variation>
    <location>
        <position position="1183"/>
    </location>
</feature>
<feature type="sequence variant" id="VAR_020187" description="In dbSNP:rs1058793." evidence="10">
    <original>V</original>
    <variation>I</variation>
    <location>
        <position position="1240"/>
    </location>
</feature>
<feature type="sequence variant" id="VAR_024371" description="In dbSNP:rs4145944." evidence="8">
    <original>S</original>
    <variation>T</variation>
    <location>
        <position position="1389"/>
    </location>
</feature>
<feature type="sequence variant" id="VAR_048395" description="In dbSNP:rs35375547.">
    <original>A</original>
    <variation>G</variation>
    <location>
        <position position="1392"/>
    </location>
</feature>
<feature type="mutagenesis site" description="Impairs ATPase flippase activity." evidence="13">
    <original>NW</original>
    <variation>QA</variation>
    <location>
        <begin position="110"/>
        <end position="111"/>
    </location>
</feature>
<feature type="mutagenesis site" description="Impairs ATPase flippase activity." evidence="13">
    <original>E</original>
    <variation>Q</variation>
    <location>
        <position position="215"/>
    </location>
</feature>
<feature type="mutagenesis site" description="Impairs ATPase flippase activity." evidence="13">
    <original>Q</original>
    <variation>N</variation>
    <location>
        <position position="381"/>
    </location>
</feature>
<feature type="mutagenesis site" description="Increases ATPase flippase activity." evidence="13">
    <original>V</original>
    <variation>T</variation>
    <location>
        <position position="382"/>
    </location>
</feature>
<feature type="mutagenesis site" description="Impairs ATPase flippase activity." evidence="13">
    <original>LI</original>
    <variation>IT</variation>
    <location>
        <begin position="1148"/>
        <end position="1149"/>
    </location>
</feature>
<feature type="sequence conflict" description="In Ref. 1; CAD29577." evidence="16" ref="1">
    <original>D</original>
    <variation>G</variation>
    <location>
        <position position="142"/>
    </location>
</feature>
<feature type="sequence conflict" description="In Ref. 1; CAD29577." evidence="16" ref="1">
    <original>K</original>
    <variation>R</variation>
    <location>
        <position position="1002"/>
    </location>
</feature>
<feature type="sequence conflict" description="In Ref. 1; CAD29577." evidence="16" ref="1">
    <original>S</original>
    <variation>Y</variation>
    <location>
        <position position="1090"/>
    </location>
</feature>
<sequence>MTEALQWARYHWRRLIRGATRDDDSGPYNYSSLLACGRKSSQTPKLSGRHRIVVPHIQPFKDEYEKFSGAYVNNRIRTTKYTLLNFVPRNLFEQFHRAANLYFLFLVVLNWVPLVEAFQKEITMLPLVVVLTIIAIKDGLEDYRKYKIDKQINNLITKVYSRKEKKYIDRCWKDVTVGDFIRLSCNEVIPADMVLLFSTDPDGICHIETSGLDGESNLKQRQVVRGYAEQDSEVDPEKFSSRIECESPNNDLSRFRGFLEHSNKERVGLSKENLLLRGCTIRNTEAVVGIVVYAGHETKAMLNNSGPRYKRSKLERRANTDVLWCVMLLVIMCLTGAVGHGIWLSRYEKMHFFNVPEPDGHIISPLLAGFYMFWTMIILLQVLIPISLYVSIEIVKLGQIYFIQSDVDFYNEKMDSIVQCRALNIAEDLGQIQYLFSDKTGTLTENKMVFRRCSVAGFDYCHEENARRLESYQEAVSEDEDFIDTVSGSLSNMAKPRAPSCRTVHNGPLGNKPSNHLAGSSFTLGSGEGASEVPHSRQAAFSSPIETDVVPDTRLLDKFSQITPRLFMPLDETIQNPPMETLYIIDFFIALAICNTVVVSAPNQPRQKIRHPSLGGLPIKSLEEIKSLFQRWSVRRSSSPSLNSGKEPSSGVPNAFVSRLPLFSRMKPASPVEEEVSQVCESPQCSSSSACCTETEKQHGDAGLLNGKAESLPGQPLACNLCYEAESPDEAALVYAARAYQCTLRSRTPEQVMVDFAALGPLTFQLLHILPFDSVRKRMSVVVRHPLSNQVVVYTKGADSVIMELLSVASPDGASLEKQQMIVREKTQKHLDDYAKQGLRTLCIAKKVMSDTEYAEWLRNHFLAETSIDNREELLLESAMRLENKLTLLGATGIEDRLQEGVPESIEALHKAGIKIWMLTGDKQETAVNIAYACKLLEPDDKLFILNTQSKDACGMLMSTILKELQKKTQALPEQVSLSEDLLQPPVPRDSGLRAGLIITGKTLEFALQESLQKQFLELTSWCQAVVCCRATPLQKSEVVKLVRSHLQVMTLAIGDGANDVSMIQVADIGIGVSGQEGMQAVMASDFAVSQFKHLSKLLLVHGHWCYTRLSNMILYFFYKNVAYVNLLFWYQFFCGFSGTSMTDYWVLIFFNLLFTSAPPVIYGVLEKDVSAETLMQLPELYRSGQKSEAYLPHTFWITLLDAFYQSLVCFFVPYFTYQGSDTDIFAFGNPLNTAALFIVLLHLVIESKSLTWIHLLVIIGSILSYFLFAIVFGAMCVTCNPPSNPYWIMQEHMLDPVFYLVCILTTSIALLPRFVYRVLQGSLFPSPILRAKHFDRLTPEERTKALKKWRGAGKMNQVTSKYANQSAGKSGRRPMPGPSAVFAMKSASSCAIEQGNLSLCETALDQGYSETKAFEMAGPSKGKES</sequence>
<keyword id="KW-0025">Alternative splicing</keyword>
<keyword id="KW-0067">ATP-binding</keyword>
<keyword id="KW-1003">Cell membrane</keyword>
<keyword id="KW-0256">Endoplasmic reticulum</keyword>
<keyword id="KW-0445">Lipid transport</keyword>
<keyword id="KW-0460">Magnesium</keyword>
<keyword id="KW-0472">Membrane</keyword>
<keyword id="KW-0479">Metal-binding</keyword>
<keyword id="KW-0547">Nucleotide-binding</keyword>
<keyword id="KW-1267">Proteomics identification</keyword>
<keyword id="KW-1185">Reference proteome</keyword>
<keyword id="KW-1278">Translocase</keyword>
<keyword id="KW-0812">Transmembrane</keyword>
<keyword id="KW-1133">Transmembrane helix</keyword>
<keyword id="KW-0813">Transport</keyword>
<name>AT10D_HUMAN</name>
<reference key="1">
    <citation type="journal article" date="2003" name="Mamm. Genome">
        <title>Characterization of a putative type IV aminophospholipid transporter P-type ATPase.</title>
        <authorList>
            <person name="Flamant S."/>
            <person name="Pescher P."/>
            <person name="Lemercier B."/>
            <person name="Clement-Ziza M."/>
            <person name="Kepes F."/>
            <person name="Fellous M."/>
            <person name="Milon G."/>
            <person name="Marchal G."/>
            <person name="Besmond C."/>
        </authorList>
    </citation>
    <scope>NUCLEOTIDE SEQUENCE [MRNA] (ISOFORM 1)</scope>
    <scope>TISSUE SPECIFICITY</scope>
    <source>
        <tissue>Monocyte</tissue>
    </source>
</reference>
<reference key="2">
    <citation type="journal article" date="2005" name="Nature">
        <title>Generation and annotation of the DNA sequences of human chromosomes 2 and 4.</title>
        <authorList>
            <person name="Hillier L.W."/>
            <person name="Graves T.A."/>
            <person name="Fulton R.S."/>
            <person name="Fulton L.A."/>
            <person name="Pepin K.H."/>
            <person name="Minx P."/>
            <person name="Wagner-McPherson C."/>
            <person name="Layman D."/>
            <person name="Wylie K."/>
            <person name="Sekhon M."/>
            <person name="Becker M.C."/>
            <person name="Fewell G.A."/>
            <person name="Delehaunty K.D."/>
            <person name="Miner T.L."/>
            <person name="Nash W.E."/>
            <person name="Kremitzki C."/>
            <person name="Oddy L."/>
            <person name="Du H."/>
            <person name="Sun H."/>
            <person name="Bradshaw-Cordum H."/>
            <person name="Ali J."/>
            <person name="Carter J."/>
            <person name="Cordes M."/>
            <person name="Harris A."/>
            <person name="Isak A."/>
            <person name="van Brunt A."/>
            <person name="Nguyen C."/>
            <person name="Du F."/>
            <person name="Courtney L."/>
            <person name="Kalicki J."/>
            <person name="Ozersky P."/>
            <person name="Abbott S."/>
            <person name="Armstrong J."/>
            <person name="Belter E.A."/>
            <person name="Caruso L."/>
            <person name="Cedroni M."/>
            <person name="Cotton M."/>
            <person name="Davidson T."/>
            <person name="Desai A."/>
            <person name="Elliott G."/>
            <person name="Erb T."/>
            <person name="Fronick C."/>
            <person name="Gaige T."/>
            <person name="Haakenson W."/>
            <person name="Haglund K."/>
            <person name="Holmes A."/>
            <person name="Harkins R."/>
            <person name="Kim K."/>
            <person name="Kruchowski S.S."/>
            <person name="Strong C.M."/>
            <person name="Grewal N."/>
            <person name="Goyea E."/>
            <person name="Hou S."/>
            <person name="Levy A."/>
            <person name="Martinka S."/>
            <person name="Mead K."/>
            <person name="McLellan M.D."/>
            <person name="Meyer R."/>
            <person name="Randall-Maher J."/>
            <person name="Tomlinson C."/>
            <person name="Dauphin-Kohlberg S."/>
            <person name="Kozlowicz-Reilly A."/>
            <person name="Shah N."/>
            <person name="Swearengen-Shahid S."/>
            <person name="Snider J."/>
            <person name="Strong J.T."/>
            <person name="Thompson J."/>
            <person name="Yoakum M."/>
            <person name="Leonard S."/>
            <person name="Pearman C."/>
            <person name="Trani L."/>
            <person name="Radionenko M."/>
            <person name="Waligorski J.E."/>
            <person name="Wang C."/>
            <person name="Rock S.M."/>
            <person name="Tin-Wollam A.-M."/>
            <person name="Maupin R."/>
            <person name="Latreille P."/>
            <person name="Wendl M.C."/>
            <person name="Yang S.-P."/>
            <person name="Pohl C."/>
            <person name="Wallis J.W."/>
            <person name="Spieth J."/>
            <person name="Bieri T.A."/>
            <person name="Berkowicz N."/>
            <person name="Nelson J.O."/>
            <person name="Osborne J."/>
            <person name="Ding L."/>
            <person name="Meyer R."/>
            <person name="Sabo A."/>
            <person name="Shotland Y."/>
            <person name="Sinha P."/>
            <person name="Wohldmann P.E."/>
            <person name="Cook L.L."/>
            <person name="Hickenbotham M.T."/>
            <person name="Eldred J."/>
            <person name="Williams D."/>
            <person name="Jones T.A."/>
            <person name="She X."/>
            <person name="Ciccarelli F.D."/>
            <person name="Izaurralde E."/>
            <person name="Taylor J."/>
            <person name="Schmutz J."/>
            <person name="Myers R.M."/>
            <person name="Cox D.R."/>
            <person name="Huang X."/>
            <person name="McPherson J.D."/>
            <person name="Mardis E.R."/>
            <person name="Clifton S.W."/>
            <person name="Warren W.C."/>
            <person name="Chinwalla A.T."/>
            <person name="Eddy S.R."/>
            <person name="Marra M.A."/>
            <person name="Ovcharenko I."/>
            <person name="Furey T.S."/>
            <person name="Miller W."/>
            <person name="Eichler E.E."/>
            <person name="Bork P."/>
            <person name="Suyama M."/>
            <person name="Torrents D."/>
            <person name="Waterston R.H."/>
            <person name="Wilson R.K."/>
        </authorList>
    </citation>
    <scope>NUCLEOTIDE SEQUENCE [LARGE SCALE GENOMIC DNA]</scope>
</reference>
<reference key="3">
    <citation type="submission" date="2005-07" db="EMBL/GenBank/DDBJ databases">
        <authorList>
            <person name="Mural R.J."/>
            <person name="Istrail S."/>
            <person name="Sutton G.G."/>
            <person name="Florea L."/>
            <person name="Halpern A.L."/>
            <person name="Mobarry C.M."/>
            <person name="Lippert R."/>
            <person name="Walenz B."/>
            <person name="Shatkay H."/>
            <person name="Dew I."/>
            <person name="Miller J.R."/>
            <person name="Flanigan M.J."/>
            <person name="Edwards N.J."/>
            <person name="Bolanos R."/>
            <person name="Fasulo D."/>
            <person name="Halldorsson B.V."/>
            <person name="Hannenhalli S."/>
            <person name="Turner R."/>
            <person name="Yooseph S."/>
            <person name="Lu F."/>
            <person name="Nusskern D.R."/>
            <person name="Shue B.C."/>
            <person name="Zheng X.H."/>
            <person name="Zhong F."/>
            <person name="Delcher A.L."/>
            <person name="Huson D.H."/>
            <person name="Kravitz S.A."/>
            <person name="Mouchard L."/>
            <person name="Reinert K."/>
            <person name="Remington K.A."/>
            <person name="Clark A.G."/>
            <person name="Waterman M.S."/>
            <person name="Eichler E.E."/>
            <person name="Adams M.D."/>
            <person name="Hunkapiller M.W."/>
            <person name="Myers E.W."/>
            <person name="Venter J.C."/>
        </authorList>
    </citation>
    <scope>NUCLEOTIDE SEQUENCE [LARGE SCALE GENOMIC DNA]</scope>
</reference>
<reference key="4">
    <citation type="journal article" date="2004" name="Genome Res.">
        <title>The status, quality, and expansion of the NIH full-length cDNA project: the Mammalian Gene Collection (MGC).</title>
        <authorList>
            <consortium name="The MGC Project Team"/>
        </authorList>
    </citation>
    <scope>NUCLEOTIDE SEQUENCE [LARGE SCALE MRNA]</scope>
    <scope>VARIANTS ILE-43 AND ILE-1240</scope>
</reference>
<reference key="5">
    <citation type="journal article" date="2004" name="Nat. Genet.">
        <title>Complete sequencing and characterization of 21,243 full-length human cDNAs.</title>
        <authorList>
            <person name="Ota T."/>
            <person name="Suzuki Y."/>
            <person name="Nishikawa T."/>
            <person name="Otsuki T."/>
            <person name="Sugiyama T."/>
            <person name="Irie R."/>
            <person name="Wakamatsu A."/>
            <person name="Hayashi K."/>
            <person name="Sato H."/>
            <person name="Nagai K."/>
            <person name="Kimura K."/>
            <person name="Makita H."/>
            <person name="Sekine M."/>
            <person name="Obayashi M."/>
            <person name="Nishi T."/>
            <person name="Shibahara T."/>
            <person name="Tanaka T."/>
            <person name="Ishii S."/>
            <person name="Yamamoto J."/>
            <person name="Saito K."/>
            <person name="Kawai Y."/>
            <person name="Isono Y."/>
            <person name="Nakamura Y."/>
            <person name="Nagahari K."/>
            <person name="Murakami K."/>
            <person name="Yasuda T."/>
            <person name="Iwayanagi T."/>
            <person name="Wagatsuma M."/>
            <person name="Shiratori A."/>
            <person name="Sudo H."/>
            <person name="Hosoiri T."/>
            <person name="Kaku Y."/>
            <person name="Kodaira H."/>
            <person name="Kondo H."/>
            <person name="Sugawara M."/>
            <person name="Takahashi M."/>
            <person name="Kanda K."/>
            <person name="Yokoi T."/>
            <person name="Furuya T."/>
            <person name="Kikkawa E."/>
            <person name="Omura Y."/>
            <person name="Abe K."/>
            <person name="Kamihara K."/>
            <person name="Katsuta N."/>
            <person name="Sato K."/>
            <person name="Tanikawa M."/>
            <person name="Yamazaki M."/>
            <person name="Ninomiya K."/>
            <person name="Ishibashi T."/>
            <person name="Yamashita H."/>
            <person name="Murakawa K."/>
            <person name="Fujimori K."/>
            <person name="Tanai H."/>
            <person name="Kimata M."/>
            <person name="Watanabe M."/>
            <person name="Hiraoka S."/>
            <person name="Chiba Y."/>
            <person name="Ishida S."/>
            <person name="Ono Y."/>
            <person name="Takiguchi S."/>
            <person name="Watanabe S."/>
            <person name="Yosida M."/>
            <person name="Hotuta T."/>
            <person name="Kusano J."/>
            <person name="Kanehori K."/>
            <person name="Takahashi-Fujii A."/>
            <person name="Hara H."/>
            <person name="Tanase T.-O."/>
            <person name="Nomura Y."/>
            <person name="Togiya S."/>
            <person name="Komai F."/>
            <person name="Hara R."/>
            <person name="Takeuchi K."/>
            <person name="Arita M."/>
            <person name="Imose N."/>
            <person name="Musashino K."/>
            <person name="Yuuki H."/>
            <person name="Oshima A."/>
            <person name="Sasaki N."/>
            <person name="Aotsuka S."/>
            <person name="Yoshikawa Y."/>
            <person name="Matsunawa H."/>
            <person name="Ichihara T."/>
            <person name="Shiohata N."/>
            <person name="Sano S."/>
            <person name="Moriya S."/>
            <person name="Momiyama H."/>
            <person name="Satoh N."/>
            <person name="Takami S."/>
            <person name="Terashima Y."/>
            <person name="Suzuki O."/>
            <person name="Nakagawa S."/>
            <person name="Senoh A."/>
            <person name="Mizoguchi H."/>
            <person name="Goto Y."/>
            <person name="Shimizu F."/>
            <person name="Wakebe H."/>
            <person name="Hishigaki H."/>
            <person name="Watanabe T."/>
            <person name="Sugiyama A."/>
            <person name="Takemoto M."/>
            <person name="Kawakami B."/>
            <person name="Yamazaki M."/>
            <person name="Watanabe K."/>
            <person name="Kumagai A."/>
            <person name="Itakura S."/>
            <person name="Fukuzumi Y."/>
            <person name="Fujimori Y."/>
            <person name="Komiyama M."/>
            <person name="Tashiro H."/>
            <person name="Tanigami A."/>
            <person name="Fujiwara T."/>
            <person name="Ono T."/>
            <person name="Yamada K."/>
            <person name="Fujii Y."/>
            <person name="Ozaki K."/>
            <person name="Hirao M."/>
            <person name="Ohmori Y."/>
            <person name="Kawabata A."/>
            <person name="Hikiji T."/>
            <person name="Kobatake N."/>
            <person name="Inagaki H."/>
            <person name="Ikema Y."/>
            <person name="Okamoto S."/>
            <person name="Okitani R."/>
            <person name="Kawakami T."/>
            <person name="Noguchi S."/>
            <person name="Itoh T."/>
            <person name="Shigeta K."/>
            <person name="Senba T."/>
            <person name="Matsumura K."/>
            <person name="Nakajima Y."/>
            <person name="Mizuno T."/>
            <person name="Morinaga M."/>
            <person name="Sasaki M."/>
            <person name="Togashi T."/>
            <person name="Oyama M."/>
            <person name="Hata H."/>
            <person name="Watanabe M."/>
            <person name="Komatsu T."/>
            <person name="Mizushima-Sugano J."/>
            <person name="Satoh T."/>
            <person name="Shirai Y."/>
            <person name="Takahashi Y."/>
            <person name="Nakagawa K."/>
            <person name="Okumura K."/>
            <person name="Nagase T."/>
            <person name="Nomura N."/>
            <person name="Kikuchi H."/>
            <person name="Masuho Y."/>
            <person name="Yamashita R."/>
            <person name="Nakai K."/>
            <person name="Yada T."/>
            <person name="Nakamura Y."/>
            <person name="Ohara O."/>
            <person name="Isogai T."/>
            <person name="Sugano S."/>
        </authorList>
    </citation>
    <scope>NUCLEOTIDE SEQUENCE [LARGE SCALE MRNA] OF 354-1426 (ISOFORM 2)</scope>
</reference>
<reference key="6">
    <citation type="journal article" date="2000" name="DNA Res.">
        <title>Prediction of the coding sequences of unidentified human genes. XVII. The complete sequences of 100 new cDNA clones from brain which code for large proteins in vitro.</title>
        <authorList>
            <person name="Nagase T."/>
            <person name="Kikuno R."/>
            <person name="Ishikawa K."/>
            <person name="Hirosawa M."/>
            <person name="Ohara O."/>
        </authorList>
    </citation>
    <scope>NUCLEOTIDE SEQUENCE [LARGE SCALE MRNA] OF 777-1426</scope>
    <scope>VARIANT THR-1389</scope>
    <source>
        <tissue>Brain</tissue>
    </source>
</reference>
<reference key="7">
    <citation type="journal article" date="2011" name="J. Biol. Chem.">
        <title>ATP9B, a P4-ATPase (a putative aminophospholipid translocase), localizes to the trans-Golgi network in a CDC50 protein-independent manner.</title>
        <authorList>
            <person name="Takatsu H."/>
            <person name="Baba K."/>
            <person name="Shima T."/>
            <person name="Umino H."/>
            <person name="Kato U."/>
            <person name="Umeda M."/>
            <person name="Nakayama K."/>
            <person name="Shin H.W."/>
        </authorList>
    </citation>
    <scope>SUBCELLULAR LOCATION</scope>
</reference>
<reference key="8">
    <citation type="journal article" date="2015" name="J. Biol. Chem.">
        <title>Phospholipid Flippase ATP10A Translocates Phosphatidylcholine and Is Involved in Plasma Membrane Dynamics.</title>
        <authorList>
            <person name="Naito T."/>
            <person name="Takatsu H."/>
            <person name="Miyano R."/>
            <person name="Takada N."/>
            <person name="Nakayama K."/>
            <person name="Shin H.W."/>
        </authorList>
    </citation>
    <scope>SUBCELLULAR LOCATION</scope>
    <scope>INTERACTION WITH TMEM30A</scope>
</reference>
<reference key="9">
    <citation type="journal article" date="2019" name="J. Biol. Chem.">
        <title>Yeast and human P4-ATPases transport glycosphingolipids using conserved structural motifs.</title>
        <authorList>
            <person name="Roland B.P."/>
            <person name="Naito T."/>
            <person name="Best J.T."/>
            <person name="Arnaiz-Yepez C."/>
            <person name="Takatsu H."/>
            <person name="Yu R.J."/>
            <person name="Shin H.W."/>
            <person name="Graham T.R."/>
        </authorList>
    </citation>
    <scope>FUNCTION</scope>
    <scope>CATALYTIC ACTIVITY</scope>
    <scope>SUBCELLULAR LOCATION</scope>
    <scope>MUTAGENESIS OF 110-ASN-TRP-111; GLU-215; GLN-381; VAL-382 AND 1148-LEU-ILE-1149</scope>
</reference>
<protein>
    <recommendedName>
        <fullName>Phospholipid-transporting ATPase VD</fullName>
        <ecNumber evidence="13">7.6.2.1</ecNumber>
    </recommendedName>
    <alternativeName>
        <fullName>ATPase class V type 10D</fullName>
    </alternativeName>
    <alternativeName>
        <fullName>P4-ATPase flippase complex alpha subunit ATP10D</fullName>
    </alternativeName>
</protein>
<gene>
    <name evidence="15" type="primary">ATP10D</name>
    <name type="synonym">ATPVD</name>
    <name type="synonym">KIAA1487</name>
</gene>
<proteinExistence type="evidence at protein level"/>
<dbReference type="EC" id="7.6.2.1" evidence="13"/>
<dbReference type="EMBL" id="AJ441078">
    <property type="protein sequence ID" value="CAD29577.1"/>
    <property type="molecule type" value="mRNA"/>
</dbReference>
<dbReference type="EMBL" id="AC092597">
    <property type="status" value="NOT_ANNOTATED_CDS"/>
    <property type="molecule type" value="Genomic_DNA"/>
</dbReference>
<dbReference type="EMBL" id="AC107398">
    <property type="status" value="NOT_ANNOTATED_CDS"/>
    <property type="molecule type" value="Genomic_DNA"/>
</dbReference>
<dbReference type="EMBL" id="CH471069">
    <property type="protein sequence ID" value="EAW93036.1"/>
    <property type="molecule type" value="Genomic_DNA"/>
</dbReference>
<dbReference type="EMBL" id="BC131535">
    <property type="protein sequence ID" value="AAI31536.1"/>
    <property type="molecule type" value="mRNA"/>
</dbReference>
<dbReference type="EMBL" id="AK027598">
    <property type="protein sequence ID" value="BAB55221.1"/>
    <property type="status" value="ALT_FRAME"/>
    <property type="molecule type" value="mRNA"/>
</dbReference>
<dbReference type="EMBL" id="AK074930">
    <property type="protein sequence ID" value="BAC11299.1"/>
    <property type="status" value="ALT_INIT"/>
    <property type="molecule type" value="mRNA"/>
</dbReference>
<dbReference type="EMBL" id="AB040920">
    <property type="protein sequence ID" value="BAA96011.1"/>
    <property type="molecule type" value="mRNA"/>
</dbReference>
<dbReference type="CCDS" id="CCDS3476.1">
    <molecule id="Q9P241-1"/>
</dbReference>
<dbReference type="RefSeq" id="NP_065186.3">
    <molecule id="Q9P241-1"/>
    <property type="nucleotide sequence ID" value="NM_020453.3"/>
</dbReference>
<dbReference type="SMR" id="Q9P241"/>
<dbReference type="BioGRID" id="121446">
    <property type="interactions" value="8"/>
</dbReference>
<dbReference type="ComplexPortal" id="CPX-6309">
    <property type="entry name" value="ATP10D-CDC50A P4-ATPase complex"/>
</dbReference>
<dbReference type="FunCoup" id="Q9P241">
    <property type="interactions" value="763"/>
</dbReference>
<dbReference type="IntAct" id="Q9P241">
    <property type="interactions" value="3"/>
</dbReference>
<dbReference type="STRING" id="9606.ENSP00000273859"/>
<dbReference type="TCDB" id="3.A.3.8.25">
    <property type="family name" value="the p-type atpase (p-atpase) superfamily"/>
</dbReference>
<dbReference type="iPTMnet" id="Q9P241"/>
<dbReference type="PhosphoSitePlus" id="Q9P241"/>
<dbReference type="BioMuta" id="ATP10D"/>
<dbReference type="DMDM" id="300669610"/>
<dbReference type="jPOST" id="Q9P241"/>
<dbReference type="MassIVE" id="Q9P241"/>
<dbReference type="PaxDb" id="9606-ENSP00000273859"/>
<dbReference type="PeptideAtlas" id="Q9P241"/>
<dbReference type="ProteomicsDB" id="83721">
    <molecule id="Q9P241-1"/>
</dbReference>
<dbReference type="ProteomicsDB" id="83722">
    <molecule id="Q9P241-2"/>
</dbReference>
<dbReference type="Antibodypedia" id="23760">
    <property type="antibodies" value="41 antibodies from 13 providers"/>
</dbReference>
<dbReference type="DNASU" id="57205"/>
<dbReference type="Ensembl" id="ENST00000273859.8">
    <molecule id="Q9P241-1"/>
    <property type="protein sequence ID" value="ENSP00000273859.3"/>
    <property type="gene ID" value="ENSG00000145246.14"/>
</dbReference>
<dbReference type="GeneID" id="57205"/>
<dbReference type="KEGG" id="hsa:57205"/>
<dbReference type="MANE-Select" id="ENST00000273859.8">
    <property type="protein sequence ID" value="ENSP00000273859.3"/>
    <property type="RefSeq nucleotide sequence ID" value="NM_020453.4"/>
    <property type="RefSeq protein sequence ID" value="NP_065186.3"/>
</dbReference>
<dbReference type="UCSC" id="uc003gxk.2">
    <molecule id="Q9P241-1"/>
    <property type="organism name" value="human"/>
</dbReference>
<dbReference type="AGR" id="HGNC:13549"/>
<dbReference type="CTD" id="57205"/>
<dbReference type="DisGeNET" id="57205"/>
<dbReference type="GeneCards" id="ATP10D"/>
<dbReference type="HGNC" id="HGNC:13549">
    <property type="gene designation" value="ATP10D"/>
</dbReference>
<dbReference type="HPA" id="ENSG00000145246">
    <property type="expression patterns" value="Low tissue specificity"/>
</dbReference>
<dbReference type="MIM" id="619815">
    <property type="type" value="gene"/>
</dbReference>
<dbReference type="neXtProt" id="NX_Q9P241"/>
<dbReference type="OpenTargets" id="ENSG00000145246"/>
<dbReference type="PharmGKB" id="PA25100"/>
<dbReference type="VEuPathDB" id="HostDB:ENSG00000145246"/>
<dbReference type="eggNOG" id="KOG0206">
    <property type="taxonomic scope" value="Eukaryota"/>
</dbReference>
<dbReference type="GeneTree" id="ENSGT00940000156728"/>
<dbReference type="HOGENOM" id="CLU_000846_3_4_1"/>
<dbReference type="InParanoid" id="Q9P241"/>
<dbReference type="OMA" id="KKYIDCC"/>
<dbReference type="OrthoDB" id="377733at2759"/>
<dbReference type="PAN-GO" id="Q9P241">
    <property type="GO annotations" value="3 GO annotations based on evolutionary models"/>
</dbReference>
<dbReference type="PhylomeDB" id="Q9P241"/>
<dbReference type="TreeFam" id="TF354252"/>
<dbReference type="BRENDA" id="7.6.2.1">
    <property type="organism ID" value="2681"/>
</dbReference>
<dbReference type="PathwayCommons" id="Q9P241"/>
<dbReference type="Reactome" id="R-HSA-936837">
    <property type="pathway name" value="Ion transport by P-type ATPases"/>
</dbReference>
<dbReference type="SignaLink" id="Q9P241"/>
<dbReference type="BioGRID-ORCS" id="57205">
    <property type="hits" value="9 hits in 1157 CRISPR screens"/>
</dbReference>
<dbReference type="ChiTaRS" id="ATP10D">
    <property type="organism name" value="human"/>
</dbReference>
<dbReference type="GenomeRNAi" id="57205"/>
<dbReference type="Pharos" id="Q9P241">
    <property type="development level" value="Tdark"/>
</dbReference>
<dbReference type="PRO" id="PR:Q9P241"/>
<dbReference type="Proteomes" id="UP000005640">
    <property type="component" value="Chromosome 4"/>
</dbReference>
<dbReference type="RNAct" id="Q9P241">
    <property type="molecule type" value="protein"/>
</dbReference>
<dbReference type="Bgee" id="ENSG00000145246">
    <property type="expression patterns" value="Expressed in corpus epididymis and 183 other cell types or tissues"/>
</dbReference>
<dbReference type="ExpressionAtlas" id="Q9P241">
    <property type="expression patterns" value="baseline and differential"/>
</dbReference>
<dbReference type="GO" id="GO:0005783">
    <property type="term" value="C:endoplasmic reticulum"/>
    <property type="evidence" value="ECO:0000314"/>
    <property type="project" value="UniProtKB"/>
</dbReference>
<dbReference type="GO" id="GO:0005789">
    <property type="term" value="C:endoplasmic reticulum membrane"/>
    <property type="evidence" value="ECO:0007669"/>
    <property type="project" value="UniProtKB-SubCell"/>
</dbReference>
<dbReference type="GO" id="GO:0016020">
    <property type="term" value="C:membrane"/>
    <property type="evidence" value="ECO:0000303"/>
    <property type="project" value="UniProtKB"/>
</dbReference>
<dbReference type="GO" id="GO:0005654">
    <property type="term" value="C:nucleoplasm"/>
    <property type="evidence" value="ECO:0000314"/>
    <property type="project" value="HPA"/>
</dbReference>
<dbReference type="GO" id="GO:1990531">
    <property type="term" value="C:phospholipid-translocating ATPase complex"/>
    <property type="evidence" value="ECO:0000314"/>
    <property type="project" value="UniProtKB"/>
</dbReference>
<dbReference type="GO" id="GO:0005886">
    <property type="term" value="C:plasma membrane"/>
    <property type="evidence" value="ECO:0000314"/>
    <property type="project" value="HPA"/>
</dbReference>
<dbReference type="GO" id="GO:0005524">
    <property type="term" value="F:ATP binding"/>
    <property type="evidence" value="ECO:0000303"/>
    <property type="project" value="UniProtKB"/>
</dbReference>
<dbReference type="GO" id="GO:0016887">
    <property type="term" value="F:ATP hydrolysis activity"/>
    <property type="evidence" value="ECO:0007669"/>
    <property type="project" value="InterPro"/>
</dbReference>
<dbReference type="GO" id="GO:0140326">
    <property type="term" value="F:ATPase-coupled intramembrane lipid transporter activity"/>
    <property type="evidence" value="ECO:0000318"/>
    <property type="project" value="GO_Central"/>
</dbReference>
<dbReference type="GO" id="GO:0140351">
    <property type="term" value="F:glycosylceramide flippase activity"/>
    <property type="evidence" value="ECO:0000314"/>
    <property type="project" value="UniProtKB"/>
</dbReference>
<dbReference type="GO" id="GO:0000287">
    <property type="term" value="F:magnesium ion binding"/>
    <property type="evidence" value="ECO:0000303"/>
    <property type="project" value="UniProtKB"/>
</dbReference>
<dbReference type="GO" id="GO:0006812">
    <property type="term" value="P:monoatomic cation transport"/>
    <property type="evidence" value="ECO:0000303"/>
    <property type="project" value="UniProtKB"/>
</dbReference>
<dbReference type="GO" id="GO:0034220">
    <property type="term" value="P:monoatomic ion transmembrane transport"/>
    <property type="evidence" value="ECO:0000304"/>
    <property type="project" value="Reactome"/>
</dbReference>
<dbReference type="GO" id="GO:0045332">
    <property type="term" value="P:phospholipid translocation"/>
    <property type="evidence" value="ECO:0000318"/>
    <property type="project" value="GO_Central"/>
</dbReference>
<dbReference type="CDD" id="cd02073">
    <property type="entry name" value="P-type_ATPase_APLT_Dnf-like"/>
    <property type="match status" value="1"/>
</dbReference>
<dbReference type="FunFam" id="2.70.150.10:FF:000022">
    <property type="entry name" value="Phospholipid-transporting ATPase"/>
    <property type="match status" value="1"/>
</dbReference>
<dbReference type="FunFam" id="3.40.1110.10:FF:000009">
    <property type="entry name" value="Phospholipid-transporting ATPase"/>
    <property type="match status" value="1"/>
</dbReference>
<dbReference type="FunFam" id="3.40.50.1000:FF:000023">
    <property type="entry name" value="Phospholipid-transporting ATPase"/>
    <property type="match status" value="1"/>
</dbReference>
<dbReference type="FunFam" id="3.40.50.1000:FF:000001">
    <property type="entry name" value="Phospholipid-transporting ATPase IC"/>
    <property type="match status" value="1"/>
</dbReference>
<dbReference type="Gene3D" id="3.40.1110.10">
    <property type="entry name" value="Calcium-transporting ATPase, cytoplasmic domain N"/>
    <property type="match status" value="2"/>
</dbReference>
<dbReference type="Gene3D" id="2.70.150.10">
    <property type="entry name" value="Calcium-transporting ATPase, cytoplasmic transduction domain A"/>
    <property type="match status" value="1"/>
</dbReference>
<dbReference type="Gene3D" id="1.20.1110.10">
    <property type="entry name" value="Calcium-transporting ATPase, transmembrane domain"/>
    <property type="match status" value="1"/>
</dbReference>
<dbReference type="Gene3D" id="3.40.50.1000">
    <property type="entry name" value="HAD superfamily/HAD-like"/>
    <property type="match status" value="2"/>
</dbReference>
<dbReference type="InterPro" id="IPR023299">
    <property type="entry name" value="ATPase_P-typ_cyto_dom_N"/>
</dbReference>
<dbReference type="InterPro" id="IPR018303">
    <property type="entry name" value="ATPase_P-typ_P_site"/>
</dbReference>
<dbReference type="InterPro" id="IPR023298">
    <property type="entry name" value="ATPase_P-typ_TM_dom_sf"/>
</dbReference>
<dbReference type="InterPro" id="IPR008250">
    <property type="entry name" value="ATPase_P-typ_transduc_dom_A_sf"/>
</dbReference>
<dbReference type="InterPro" id="IPR036412">
    <property type="entry name" value="HAD-like_sf"/>
</dbReference>
<dbReference type="InterPro" id="IPR023214">
    <property type="entry name" value="HAD_sf"/>
</dbReference>
<dbReference type="InterPro" id="IPR006539">
    <property type="entry name" value="P-type_ATPase_IV"/>
</dbReference>
<dbReference type="InterPro" id="IPR032631">
    <property type="entry name" value="P-type_ATPase_N"/>
</dbReference>
<dbReference type="InterPro" id="IPR001757">
    <property type="entry name" value="P_typ_ATPase"/>
</dbReference>
<dbReference type="InterPro" id="IPR032630">
    <property type="entry name" value="P_typ_ATPase_c"/>
</dbReference>
<dbReference type="InterPro" id="IPR044492">
    <property type="entry name" value="P_typ_ATPase_HD_dom"/>
</dbReference>
<dbReference type="NCBIfam" id="TIGR01652">
    <property type="entry name" value="ATPase-Plipid"/>
    <property type="match status" value="2"/>
</dbReference>
<dbReference type="NCBIfam" id="TIGR01494">
    <property type="entry name" value="ATPase_P-type"/>
    <property type="match status" value="2"/>
</dbReference>
<dbReference type="PANTHER" id="PTHR24092:SF84">
    <property type="entry name" value="PHOSPHOLIPID-TRANSPORTING ATPASE VD"/>
    <property type="match status" value="1"/>
</dbReference>
<dbReference type="PANTHER" id="PTHR24092">
    <property type="entry name" value="PROBABLE PHOSPHOLIPID-TRANSPORTING ATPASE"/>
    <property type="match status" value="1"/>
</dbReference>
<dbReference type="Pfam" id="PF13246">
    <property type="entry name" value="Cation_ATPase"/>
    <property type="match status" value="1"/>
</dbReference>
<dbReference type="Pfam" id="PF16212">
    <property type="entry name" value="PhoLip_ATPase_C"/>
    <property type="match status" value="1"/>
</dbReference>
<dbReference type="Pfam" id="PF16209">
    <property type="entry name" value="PhoLip_ATPase_N"/>
    <property type="match status" value="1"/>
</dbReference>
<dbReference type="PRINTS" id="PR00119">
    <property type="entry name" value="CATATPASE"/>
</dbReference>
<dbReference type="SFLD" id="SFLDS00003">
    <property type="entry name" value="Haloacid_Dehalogenase"/>
    <property type="match status" value="1"/>
</dbReference>
<dbReference type="SFLD" id="SFLDF00027">
    <property type="entry name" value="p-type_atpase"/>
    <property type="match status" value="1"/>
</dbReference>
<dbReference type="SUPFAM" id="SSF81653">
    <property type="entry name" value="Calcium ATPase, transduction domain A"/>
    <property type="match status" value="1"/>
</dbReference>
<dbReference type="SUPFAM" id="SSF81665">
    <property type="entry name" value="Calcium ATPase, transmembrane domain M"/>
    <property type="match status" value="1"/>
</dbReference>
<dbReference type="SUPFAM" id="SSF56784">
    <property type="entry name" value="HAD-like"/>
    <property type="match status" value="1"/>
</dbReference>
<dbReference type="SUPFAM" id="SSF81660">
    <property type="entry name" value="Metal cation-transporting ATPase, ATP-binding domain N"/>
    <property type="match status" value="1"/>
</dbReference>
<dbReference type="PROSITE" id="PS00154">
    <property type="entry name" value="ATPASE_E1_E2"/>
    <property type="match status" value="1"/>
</dbReference>
<accession>Q9P241</accession>
<accession>A2RRC8</accession>
<accession>D6REN2</accession>
<accession>Q8NC70</accession>
<accession>Q96SR3</accession>
<comment type="function">
    <text evidence="13">Catalytic component of a P4-ATPase flippase complex, which catalyzes the hydrolysis of ATP coupled to the transport of glucosylceramide (GlcCer) from the outer to the inner leaflet of the plasma membrane.</text>
</comment>
<comment type="catalytic activity">
    <reaction evidence="13">
        <text>ATP + H2O + phospholipidSide 1 = ADP + phosphate + phospholipidSide 2.</text>
        <dbReference type="EC" id="7.6.2.1"/>
    </reaction>
</comment>
<comment type="catalytic activity">
    <reaction evidence="13">
        <text>a beta-D-glucosyl-(1&lt;-&gt;1')-N-acylsphing-4-enine(out) + ATP + H2O = a beta-D-glucosyl-(1&lt;-&gt;1')-N-acylsphing-4-enine(in) + ADP + phosphate + H(+)</text>
        <dbReference type="Rhea" id="RHEA:66036"/>
        <dbReference type="ChEBI" id="CHEBI:15377"/>
        <dbReference type="ChEBI" id="CHEBI:15378"/>
        <dbReference type="ChEBI" id="CHEBI:22801"/>
        <dbReference type="ChEBI" id="CHEBI:30616"/>
        <dbReference type="ChEBI" id="CHEBI:43474"/>
        <dbReference type="ChEBI" id="CHEBI:456216"/>
    </reaction>
    <physiologicalReaction direction="left-to-right" evidence="17">
        <dbReference type="Rhea" id="RHEA:66037"/>
    </physiologicalReaction>
</comment>
<comment type="cofactor">
    <cofactor evidence="5">
        <name>Mg(2+)</name>
        <dbReference type="ChEBI" id="CHEBI:18420"/>
    </cofactor>
</comment>
<comment type="subunit">
    <text evidence="12">Component of a P4-ATPase flippase complex which consists of a catalytic alpha subunit ATP10A and an accessory beta subunit TMEM30A.</text>
</comment>
<comment type="subcellular location">
    <subcellularLocation>
        <location evidence="11 12 13">Cell membrane</location>
        <topology evidence="6">Multi-pass membrane protein</topology>
    </subcellularLocation>
    <subcellularLocation>
        <location evidence="11 12">Endoplasmic reticulum membrane</location>
        <topology evidence="6">Multi-pass membrane protein</topology>
    </subcellularLocation>
    <text evidence="12">Exit from the endoplasmic reticulum requires the presence of TMEM30A, but not that of TMEM30B.</text>
</comment>
<comment type="alternative products">
    <event type="alternative splicing"/>
    <isoform>
        <id>Q9P241-1</id>
        <name>1</name>
        <sequence type="displayed"/>
    </isoform>
    <isoform>
        <id>Q9P241-2</id>
        <name>2</name>
        <sequence type="described" ref="VSP_006954"/>
    </isoform>
</comment>
<comment type="tissue specificity">
    <text evidence="9">Expressed in placenta and, to a lesser extent, in kidney.</text>
</comment>
<comment type="PTM">
    <text evidence="1">Autophosphorylated at the conserved aspartate of the P-type ATPase signature sequence.</text>
</comment>
<comment type="similarity">
    <text evidence="16">Belongs to the cation transport ATPase (P-type) (TC 3.A.3) family. Type IV subfamily.</text>
</comment>
<comment type="sequence caution" evidence="16">
    <conflict type="frameshift">
        <sequence resource="EMBL-CDS" id="BAB55221"/>
    </conflict>
</comment>
<comment type="sequence caution" evidence="16">
    <conflict type="erroneous initiation">
        <sequence resource="EMBL-CDS" id="BAC11299"/>
    </conflict>
</comment>
<evidence type="ECO:0000250" key="1">
    <source>
        <dbReference type="UniProtKB" id="O94823"/>
    </source>
</evidence>
<evidence type="ECO:0000250" key="2">
    <source>
        <dbReference type="UniProtKB" id="P04191"/>
    </source>
</evidence>
<evidence type="ECO:0000250" key="3">
    <source>
        <dbReference type="UniProtKB" id="Q8NB49"/>
    </source>
</evidence>
<evidence type="ECO:0000250" key="4">
    <source>
        <dbReference type="UniProtKB" id="Q9HD20"/>
    </source>
</evidence>
<evidence type="ECO:0000250" key="5">
    <source>
        <dbReference type="UniProtKB" id="Q9Y2Q0"/>
    </source>
</evidence>
<evidence type="ECO:0000255" key="6"/>
<evidence type="ECO:0000256" key="7">
    <source>
        <dbReference type="SAM" id="MobiDB-lite"/>
    </source>
</evidence>
<evidence type="ECO:0000269" key="8">
    <source>
    </source>
</evidence>
<evidence type="ECO:0000269" key="9">
    <source>
    </source>
</evidence>
<evidence type="ECO:0000269" key="10">
    <source>
    </source>
</evidence>
<evidence type="ECO:0000269" key="11">
    <source>
    </source>
</evidence>
<evidence type="ECO:0000269" key="12">
    <source>
    </source>
</evidence>
<evidence type="ECO:0000269" key="13">
    <source>
    </source>
</evidence>
<evidence type="ECO:0000303" key="14">
    <source>
    </source>
</evidence>
<evidence type="ECO:0000303" key="15">
    <source>
    </source>
</evidence>
<evidence type="ECO:0000305" key="16"/>
<evidence type="ECO:0000305" key="17">
    <source>
    </source>
</evidence>